<reference key="1">
    <citation type="submission" date="2008-07" db="EMBL/GenBank/DDBJ databases">
        <title>The NIAID influenza genome sequencing project.</title>
        <authorList>
            <person name="Spiro D."/>
            <person name="Halpin R."/>
            <person name="Boyne A."/>
            <person name="Bera J."/>
            <person name="Ghedin E."/>
            <person name="Hostetler J."/>
            <person name="Fedorova N."/>
            <person name="Hine E."/>
            <person name="Overton L."/>
            <person name="Djuric K."/>
            <person name="Sarmiento M."/>
            <person name="Sitz J."/>
            <person name="Katzel D."/>
            <person name="Manojkumar R."/>
            <person name="Devis R."/>
            <person name="Fulvini A."/>
            <person name="Silverman J."/>
            <person name="Le J."/>
            <person name="Kilbourne E.D."/>
            <person name="Pokorny B."/>
            <person name="Bucher D."/>
            <person name="Orff E."/>
            <person name="Minieri J."/>
            <person name="Onodera S."/>
            <person name="Huang L."/>
            <person name="Bao Y."/>
            <person name="Sanders R."/>
            <person name="Dernovoy D."/>
            <person name="Kiryutin B."/>
            <person name="Lipman D.J."/>
            <person name="Tatusova T."/>
        </authorList>
    </citation>
    <scope>NUCLEOTIDE SEQUENCE [GENOMIC RNA]</scope>
</reference>
<reference key="2">
    <citation type="submission" date="2008-07" db="EMBL/GenBank/DDBJ databases">
        <authorList>
            <consortium name="The NIAID Influenza Genome Sequencing Consortium"/>
        </authorList>
    </citation>
    <scope>NUCLEOTIDE SEQUENCE [GENOMIC RNA]</scope>
</reference>
<sequence>MDVNPTLLFLKVPAQNAISTTFPYTGDPPYSHGTGTGYTMDTVNRTHQYSEKGRWTTNTETGAPQLNPIDGPLPEDNEPSGYAQTDCVLEAMAFLEESHPGIFENSCIETMEVVQQTRVDKLTQGRQTYDWTLNRNQPAATALANTIEVFRSNGLTANESGRLIDFLKDVMESMNKEEMGITTHFQRKRRVRDNMTKKMITQRTMGKKKQRLNKRSYLIRALTLNTMTKDAERGKLKRRAIATPGMQIRGFVYFVETLARSICEKLEQSGLPVGGNEKKAKLANVVRKMMTNSQDTELSFTITGDNTKWNENQNPRMFLAMITYMTRNQPEWFRNVLSIAPIMFSNKMARLGKGYMFESKSMKLRTQIPAEMLASIDLKYFNDSTRKKIEKIRPLLIEGTASLSPGMMMGMFNMLSTVLGVSILNLGQKRYTKTTYWWDGLQSSDDFALIVNAPNHEGIQAGVDRFYRTCKLLGINMSKKKSYINRTGTFEFTSFFYRYGFVANFSMELPSFGVSGINESADMSIGVTVIKNNMINNDLGPATAQMALQLFIKDYRYTYRCHRGDTQIQTRRSFEIKKLWEQTRSKAGLLVSDGGPNLYNIRNLHIPEVCLKWELMDEDYQGRLCNPLNPFVSHKEIESMNNAVMMPAHGPAKNMEYDAVATTHSWIPKRNRSILNTSQRGVLEDEQMYQRCCNLFEKFFPSSSYRRPVGISSMVEAMVSRARIDTRIDFESGRIKKEEFTEIMKICSTIEELRRQK</sequence>
<accession>B4URE4</accession>
<keyword id="KW-1262">Eukaryotic host gene expression shutoff by virus</keyword>
<keyword id="KW-1191">Eukaryotic host transcription shutoff by virus</keyword>
<keyword id="KW-1035">Host cytoplasm</keyword>
<keyword id="KW-1190">Host gene expression shutoff by virus</keyword>
<keyword id="KW-1048">Host nucleus</keyword>
<keyword id="KW-0945">Host-virus interaction</keyword>
<keyword id="KW-1104">Inhibition of host RNA polymerase II by virus</keyword>
<keyword id="KW-0547">Nucleotide-binding</keyword>
<keyword id="KW-0548">Nucleotidyltransferase</keyword>
<keyword id="KW-0597">Phosphoprotein</keyword>
<keyword id="KW-0696">RNA-directed RNA polymerase</keyword>
<keyword id="KW-0808">Transferase</keyword>
<keyword id="KW-0693">Viral RNA replication</keyword>
<keyword id="KW-1195">Viral transcription</keyword>
<protein>
    <recommendedName>
        <fullName evidence="2">RNA-directed RNA polymerase catalytic subunit</fullName>
        <ecNumber evidence="2">2.7.7.48</ecNumber>
    </recommendedName>
    <alternativeName>
        <fullName evidence="2">Polymerase basic protein 1</fullName>
        <shortName evidence="2">PB1</shortName>
    </alternativeName>
    <alternativeName>
        <fullName evidence="2">RNA-directed RNA polymerase subunit P1</fullName>
    </alternativeName>
</protein>
<evidence type="ECO:0000250" key="1">
    <source>
        <dbReference type="UniProtKB" id="P03431"/>
    </source>
</evidence>
<evidence type="ECO:0000255" key="2">
    <source>
        <dbReference type="HAMAP-Rule" id="MF_04065"/>
    </source>
</evidence>
<evidence type="ECO:0000256" key="3">
    <source>
        <dbReference type="SAM" id="MobiDB-lite"/>
    </source>
</evidence>
<name>RDRP_I06A0</name>
<comment type="function">
    <text evidence="2">RNA-dependent RNA polymerase which is responsible for replication and transcription of virus RNA segments. The transcription of viral mRNAs occurs by a unique mechanism called cap-snatching. 5' methylated caps of cellular mRNAs are cleaved after 10-13 nucleotides by PA. In turn, these short capped RNAs are used as primers by PB1 for transcription of viral mRNAs. During virus replication, PB1 initiates RNA synthesis and copy vRNA into complementary RNA (cRNA) which in turn serves as a template for the production of more vRNAs.</text>
</comment>
<comment type="catalytic activity">
    <reaction evidence="2">
        <text>RNA(n) + a ribonucleoside 5'-triphosphate = RNA(n+1) + diphosphate</text>
        <dbReference type="Rhea" id="RHEA:21248"/>
        <dbReference type="Rhea" id="RHEA-COMP:14527"/>
        <dbReference type="Rhea" id="RHEA-COMP:17342"/>
        <dbReference type="ChEBI" id="CHEBI:33019"/>
        <dbReference type="ChEBI" id="CHEBI:61557"/>
        <dbReference type="ChEBI" id="CHEBI:140395"/>
        <dbReference type="EC" id="2.7.7.48"/>
    </reaction>
</comment>
<comment type="subunit">
    <text evidence="1 2">Influenza RNA polymerase is composed of three subunits: PB1, PB2 and PA. Interacts (via N-terminus) with PA (via C-terminus). Interacts (via C-terminus) with PB2 (via N-terminus); this interaction is essential for transcription initiation. Interacts (via C-terminus) with human PKP2 (via N-terminus); the interaction competitively inhibits the interaction between the RNA polymerase subunits PB1 and PB2 (By similarity).</text>
</comment>
<comment type="subcellular location">
    <subcellularLocation>
        <location evidence="2">Host nucleus</location>
    </subcellularLocation>
    <subcellularLocation>
        <location evidence="2">Host cytoplasm</location>
    </subcellularLocation>
</comment>
<comment type="PTM">
    <text evidence="2">Phosphorylated by host PRKCA.</text>
</comment>
<comment type="similarity">
    <text evidence="2">Belongs to the influenza viruses polymerase PB1 family.</text>
</comment>
<organism>
    <name type="scientific">Influenza A virus (strain A/Russia:St.Petersburg/8/2006 H1N1)</name>
    <dbReference type="NCBI Taxonomy" id="518998"/>
    <lineage>
        <taxon>Viruses</taxon>
        <taxon>Riboviria</taxon>
        <taxon>Orthornavirae</taxon>
        <taxon>Negarnaviricota</taxon>
        <taxon>Polyploviricotina</taxon>
        <taxon>Insthoviricetes</taxon>
        <taxon>Articulavirales</taxon>
        <taxon>Orthomyxoviridae</taxon>
        <taxon>Alphainfluenzavirus</taxon>
        <taxon>Alphainfluenzavirus influenzae</taxon>
        <taxon>Influenza A virus</taxon>
    </lineage>
</organism>
<gene>
    <name evidence="2" type="primary">PB1</name>
</gene>
<organismHost>
    <name type="scientific">Aves</name>
    <dbReference type="NCBI Taxonomy" id="8782"/>
</organismHost>
<organismHost>
    <name type="scientific">Homo sapiens</name>
    <name type="common">Human</name>
    <dbReference type="NCBI Taxonomy" id="9606"/>
</organismHost>
<organismHost>
    <name type="scientific">Sus scrofa</name>
    <name type="common">Pig</name>
    <dbReference type="NCBI Taxonomy" id="9823"/>
</organismHost>
<dbReference type="EC" id="2.7.7.48" evidence="2"/>
<dbReference type="EMBL" id="CY034130">
    <property type="protein sequence ID" value="ACF54595.1"/>
    <property type="molecule type" value="Viral_cRNA"/>
</dbReference>
<dbReference type="SMR" id="B4URE4"/>
<dbReference type="Proteomes" id="UP000008081">
    <property type="component" value="Genome"/>
</dbReference>
<dbReference type="GO" id="GO:0030430">
    <property type="term" value="C:host cell cytoplasm"/>
    <property type="evidence" value="ECO:0007669"/>
    <property type="project" value="UniProtKB-SubCell"/>
</dbReference>
<dbReference type="GO" id="GO:0042025">
    <property type="term" value="C:host cell nucleus"/>
    <property type="evidence" value="ECO:0007669"/>
    <property type="project" value="UniProtKB-SubCell"/>
</dbReference>
<dbReference type="GO" id="GO:0000166">
    <property type="term" value="F:nucleotide binding"/>
    <property type="evidence" value="ECO:0007669"/>
    <property type="project" value="UniProtKB-UniRule"/>
</dbReference>
<dbReference type="GO" id="GO:0003723">
    <property type="term" value="F:RNA binding"/>
    <property type="evidence" value="ECO:0007669"/>
    <property type="project" value="InterPro"/>
</dbReference>
<dbReference type="GO" id="GO:0003968">
    <property type="term" value="F:RNA-directed RNA polymerase activity"/>
    <property type="evidence" value="ECO:0007669"/>
    <property type="project" value="UniProtKB-UniRule"/>
</dbReference>
<dbReference type="GO" id="GO:0006351">
    <property type="term" value="P:DNA-templated transcription"/>
    <property type="evidence" value="ECO:0007669"/>
    <property type="project" value="UniProtKB-UniRule"/>
</dbReference>
<dbReference type="GO" id="GO:0039657">
    <property type="term" value="P:symbiont-mediated suppression of host gene expression"/>
    <property type="evidence" value="ECO:0007669"/>
    <property type="project" value="UniProtKB-KW"/>
</dbReference>
<dbReference type="GO" id="GO:0039523">
    <property type="term" value="P:symbiont-mediated suppression of host mRNA transcription via inhibition of RNA polymerase II activity"/>
    <property type="evidence" value="ECO:0007669"/>
    <property type="project" value="UniProtKB-UniRule"/>
</dbReference>
<dbReference type="GO" id="GO:0039694">
    <property type="term" value="P:viral RNA genome replication"/>
    <property type="evidence" value="ECO:0007669"/>
    <property type="project" value="UniProtKB-UniRule"/>
</dbReference>
<dbReference type="GO" id="GO:0019083">
    <property type="term" value="P:viral transcription"/>
    <property type="evidence" value="ECO:0007669"/>
    <property type="project" value="UniProtKB-KW"/>
</dbReference>
<dbReference type="Gene3D" id="6.10.140.720">
    <property type="match status" value="1"/>
</dbReference>
<dbReference type="HAMAP" id="MF_04065">
    <property type="entry name" value="INFV_RDRP"/>
    <property type="match status" value="1"/>
</dbReference>
<dbReference type="InterPro" id="IPR007099">
    <property type="entry name" value="RNA-dir_pol_NSvirus"/>
</dbReference>
<dbReference type="InterPro" id="IPR001407">
    <property type="entry name" value="RNA_pol_PB1_influenza"/>
</dbReference>
<dbReference type="Pfam" id="PF00602">
    <property type="entry name" value="Flu_PB1"/>
    <property type="match status" value="1"/>
</dbReference>
<dbReference type="PIRSF" id="PIRSF000827">
    <property type="entry name" value="RdRPol_OMV"/>
    <property type="match status" value="1"/>
</dbReference>
<dbReference type="PROSITE" id="PS50525">
    <property type="entry name" value="RDRP_SSRNA_NEG_SEG"/>
    <property type="match status" value="1"/>
</dbReference>
<proteinExistence type="inferred from homology"/>
<feature type="chain" id="PRO_0000373044" description="RNA-directed RNA polymerase catalytic subunit">
    <location>
        <begin position="1"/>
        <end position="757"/>
    </location>
</feature>
<feature type="domain" description="RdRp catalytic" evidence="2">
    <location>
        <begin position="286"/>
        <end position="483"/>
    </location>
</feature>
<feature type="region of interest" description="Disordered" evidence="3">
    <location>
        <begin position="53"/>
        <end position="82"/>
    </location>
</feature>
<feature type="region of interest" description="Promoter-binding site" evidence="2">
    <location>
        <begin position="249"/>
        <end position="256"/>
    </location>
</feature>
<feature type="short sequence motif" description="Nuclear localization signal" evidence="2">
    <location>
        <begin position="187"/>
        <end position="195"/>
    </location>
</feature>
<feature type="short sequence motif" description="Nuclear localization signal" evidence="2">
    <location>
        <begin position="203"/>
        <end position="216"/>
    </location>
</feature>
<feature type="compositionally biased region" description="Polar residues" evidence="3">
    <location>
        <begin position="55"/>
        <end position="64"/>
    </location>
</feature>